<feature type="chain" id="PRO_0000421989" description="Transmembrane channel-like protein 1">
    <location>
        <begin position="1"/>
        <end position="1285"/>
    </location>
</feature>
<feature type="topological domain" description="Cytoplasmic" evidence="4">
    <location>
        <begin position="1"/>
        <end position="164"/>
    </location>
</feature>
<feature type="transmembrane region" description="Helical" evidence="3 5 6 7">
    <location>
        <begin position="165"/>
        <end position="202"/>
    </location>
</feature>
<feature type="topological domain" description="Extracellular" evidence="4">
    <location>
        <begin position="203"/>
        <end position="260"/>
    </location>
</feature>
<feature type="transmembrane region" description="Helical" evidence="3 5 6 7">
    <location>
        <begin position="261"/>
        <end position="292"/>
    </location>
</feature>
<feature type="topological domain" description="Cytoplasmic" evidence="4">
    <location>
        <begin position="293"/>
        <end position="349"/>
    </location>
</feature>
<feature type="transmembrane region" description="Helical" evidence="3 5 6 7">
    <location>
        <begin position="350"/>
        <end position="381"/>
    </location>
</feature>
<feature type="topological domain" description="Extracellular" evidence="4">
    <location>
        <begin position="382"/>
        <end position="388"/>
    </location>
</feature>
<feature type="transmembrane region" description="Helical" evidence="3 5 6 7">
    <location>
        <begin position="389"/>
        <end position="416"/>
    </location>
</feature>
<feature type="topological domain" description="Cytoplasmic" evidence="4">
    <location>
        <begin position="417"/>
        <end position="420"/>
    </location>
</feature>
<feature type="transmembrane region" description="Helical" evidence="3 5 6 7">
    <location>
        <begin position="421"/>
        <end position="455"/>
    </location>
</feature>
<feature type="topological domain" description="Extracellular" evidence="4">
    <location>
        <begin position="456"/>
        <end position="667"/>
    </location>
</feature>
<feature type="transmembrane region" description="Helical" evidence="3 5 6 7">
    <location>
        <begin position="668"/>
        <end position="705"/>
    </location>
</feature>
<feature type="topological domain" description="Cytoplasmic" evidence="4">
    <location>
        <begin position="706"/>
        <end position="724"/>
    </location>
</feature>
<feature type="transmembrane region" description="Helical" evidence="3 5 6 7">
    <location>
        <begin position="725"/>
        <end position="745"/>
    </location>
</feature>
<feature type="topological domain" description="Extracellular" evidence="4">
    <location>
        <begin position="746"/>
        <end position="748"/>
    </location>
</feature>
<feature type="transmembrane region" description="Helical" evidence="3 5 6 7">
    <location>
        <begin position="749"/>
        <end position="771"/>
    </location>
</feature>
<feature type="topological domain" description="Cytoplasmic" evidence="4">
    <location>
        <begin position="772"/>
        <end position="785"/>
    </location>
</feature>
<feature type="transmembrane region" description="Helical" evidence="3 5 6 7">
    <location>
        <begin position="786"/>
        <end position="809"/>
    </location>
</feature>
<feature type="topological domain" description="Extracellular" evidence="4">
    <location>
        <begin position="810"/>
        <end position="852"/>
    </location>
</feature>
<feature type="transmembrane region" description="Helical" evidence="3 5 6 7">
    <location>
        <begin position="853"/>
        <end position="886"/>
    </location>
</feature>
<feature type="topological domain" description="Cytoplasmic" evidence="4">
    <location>
        <begin position="887"/>
        <end position="1285"/>
    </location>
</feature>
<feature type="region of interest" description="Disordered" evidence="1">
    <location>
        <begin position="1"/>
        <end position="29"/>
    </location>
</feature>
<feature type="region of interest" description="Disordered" evidence="1">
    <location>
        <begin position="458"/>
        <end position="488"/>
    </location>
</feature>
<feature type="region of interest" description="Required for interaction with tmie" evidence="3 5 6 7">
    <location>
        <begin position="696"/>
        <end position="720"/>
    </location>
</feature>
<feature type="region of interest" description="Required for interaction with tmie" evidence="3 5 6 7">
    <location>
        <begin position="766"/>
        <end position="773"/>
    </location>
</feature>
<feature type="region of interest" description="Disordered" evidence="1">
    <location>
        <begin position="940"/>
        <end position="962"/>
    </location>
</feature>
<feature type="region of interest" description="Disordered" evidence="1">
    <location>
        <begin position="1114"/>
        <end position="1285"/>
    </location>
</feature>
<feature type="compositionally biased region" description="Acidic residues" evidence="1">
    <location>
        <begin position="948"/>
        <end position="961"/>
    </location>
</feature>
<feature type="compositionally biased region" description="Basic and acidic residues" evidence="1">
    <location>
        <begin position="1121"/>
        <end position="1131"/>
    </location>
</feature>
<feature type="compositionally biased region" description="Basic and acidic residues" evidence="1">
    <location>
        <begin position="1146"/>
        <end position="1156"/>
    </location>
</feature>
<feature type="compositionally biased region" description="Basic and acidic residues" evidence="1">
    <location>
        <begin position="1167"/>
        <end position="1182"/>
    </location>
</feature>
<feature type="compositionally biased region" description="Acidic residues" evidence="1">
    <location>
        <begin position="1197"/>
        <end position="1208"/>
    </location>
</feature>
<feature type="site" description="Required for interaction with calm-1" evidence="3 5 6 7">
    <location>
        <position position="160"/>
    </location>
</feature>
<feature type="site" description="Required for interaction with calm-1" evidence="3 5 6 7">
    <location>
        <position position="313"/>
    </location>
</feature>
<feature type="site" description="Required for interaction with calm-1" evidence="3 5 6 7">
    <location>
        <position position="780"/>
    </location>
</feature>
<feature type="glycosylation site" description="N-linked (GalNAc...) asparagine" evidence="3 5 6 7">
    <location>
        <position position="209"/>
    </location>
</feature>
<feature type="disulfide bond" evidence="3 5 6 7">
    <location>
        <begin position="667"/>
        <end position="816"/>
    </location>
</feature>
<feature type="helix" evidence="9">
    <location>
        <begin position="76"/>
        <end position="91"/>
    </location>
</feature>
<feature type="turn" evidence="8">
    <location>
        <begin position="93"/>
        <end position="95"/>
    </location>
</feature>
<feature type="helix" evidence="9">
    <location>
        <begin position="100"/>
        <end position="117"/>
    </location>
</feature>
<feature type="turn" evidence="9">
    <location>
        <begin position="118"/>
        <end position="120"/>
    </location>
</feature>
<feature type="helix" evidence="9">
    <location>
        <begin position="123"/>
        <end position="147"/>
    </location>
</feature>
<feature type="helix" evidence="9">
    <location>
        <begin position="153"/>
        <end position="163"/>
    </location>
</feature>
<feature type="turn" evidence="9">
    <location>
        <begin position="165"/>
        <end position="167"/>
    </location>
</feature>
<feature type="helix" evidence="9">
    <location>
        <begin position="168"/>
        <end position="190"/>
    </location>
</feature>
<feature type="helix" evidence="9">
    <location>
        <begin position="193"/>
        <end position="201"/>
    </location>
</feature>
<feature type="strand" evidence="9">
    <location>
        <begin position="205"/>
        <end position="211"/>
    </location>
</feature>
<feature type="helix" evidence="9">
    <location>
        <begin position="212"/>
        <end position="215"/>
    </location>
</feature>
<feature type="helix" evidence="9">
    <location>
        <begin position="219"/>
        <end position="222"/>
    </location>
</feature>
<feature type="helix" evidence="9">
    <location>
        <begin position="223"/>
        <end position="225"/>
    </location>
</feature>
<feature type="strand" evidence="9">
    <location>
        <begin position="227"/>
        <end position="229"/>
    </location>
</feature>
<feature type="turn" evidence="9">
    <location>
        <begin position="230"/>
        <end position="234"/>
    </location>
</feature>
<feature type="turn" evidence="9">
    <location>
        <begin position="236"/>
        <end position="240"/>
    </location>
</feature>
<feature type="helix" evidence="9">
    <location>
        <begin position="245"/>
        <end position="247"/>
    </location>
</feature>
<feature type="strand" evidence="9">
    <location>
        <begin position="252"/>
        <end position="254"/>
    </location>
</feature>
<feature type="turn" evidence="9">
    <location>
        <begin position="256"/>
        <end position="258"/>
    </location>
</feature>
<feature type="helix" evidence="9">
    <location>
        <begin position="262"/>
        <end position="290"/>
    </location>
</feature>
<feature type="helix" evidence="9">
    <location>
        <begin position="303"/>
        <end position="309"/>
    </location>
</feature>
<feature type="helix" evidence="9">
    <location>
        <begin position="319"/>
        <end position="342"/>
    </location>
</feature>
<feature type="helix" evidence="9">
    <location>
        <begin position="350"/>
        <end position="380"/>
    </location>
</feature>
<feature type="strand" evidence="9">
    <location>
        <begin position="385"/>
        <end position="387"/>
    </location>
</feature>
<feature type="turn" evidence="9">
    <location>
        <begin position="390"/>
        <end position="394"/>
    </location>
</feature>
<feature type="helix" evidence="9">
    <location>
        <begin position="395"/>
        <end position="417"/>
    </location>
</feature>
<feature type="helix" evidence="9">
    <location>
        <begin position="421"/>
        <end position="458"/>
    </location>
</feature>
<feature type="helix" evidence="9">
    <location>
        <begin position="668"/>
        <end position="694"/>
    </location>
</feature>
<feature type="helix" evidence="9">
    <location>
        <begin position="696"/>
        <end position="705"/>
    </location>
</feature>
<feature type="strand" evidence="9">
    <location>
        <begin position="706"/>
        <end position="711"/>
    </location>
</feature>
<feature type="turn" evidence="9">
    <location>
        <begin position="713"/>
        <end position="715"/>
    </location>
</feature>
<feature type="strand" evidence="9">
    <location>
        <begin position="716"/>
        <end position="718"/>
    </location>
</feature>
<feature type="helix" evidence="9">
    <location>
        <begin position="725"/>
        <end position="741"/>
    </location>
</feature>
<feature type="turn" evidence="9">
    <location>
        <begin position="742"/>
        <end position="745"/>
    </location>
</feature>
<feature type="helix" evidence="9">
    <location>
        <begin position="749"/>
        <end position="771"/>
    </location>
</feature>
<feature type="strand" evidence="9">
    <location>
        <begin position="781"/>
        <end position="783"/>
    </location>
</feature>
<feature type="helix" evidence="9">
    <location>
        <begin position="786"/>
        <end position="809"/>
    </location>
</feature>
<feature type="turn" evidence="9">
    <location>
        <begin position="818"/>
        <end position="821"/>
    </location>
</feature>
<feature type="strand" evidence="9">
    <location>
        <begin position="822"/>
        <end position="825"/>
    </location>
</feature>
<feature type="helix" evidence="9">
    <location>
        <begin position="827"/>
        <end position="833"/>
    </location>
</feature>
<feature type="turn" evidence="9">
    <location>
        <begin position="834"/>
        <end position="836"/>
    </location>
</feature>
<feature type="helix" evidence="9">
    <location>
        <begin position="839"/>
        <end position="845"/>
    </location>
</feature>
<feature type="turn" evidence="9">
    <location>
        <begin position="846"/>
        <end position="849"/>
    </location>
</feature>
<feature type="helix" evidence="9">
    <location>
        <begin position="851"/>
        <end position="882"/>
    </location>
</feature>
<protein>
    <recommendedName>
        <fullName>Transmembrane channel-like protein 1</fullName>
    </recommendedName>
</protein>
<accession>D3KZG3</accession>
<accession>G4S885</accession>
<name>TMC1_CAEEL</name>
<organism>
    <name type="scientific">Caenorhabditis elegans</name>
    <dbReference type="NCBI Taxonomy" id="6239"/>
    <lineage>
        <taxon>Eukaryota</taxon>
        <taxon>Metazoa</taxon>
        <taxon>Ecdysozoa</taxon>
        <taxon>Nematoda</taxon>
        <taxon>Chromadorea</taxon>
        <taxon>Rhabditida</taxon>
        <taxon>Rhabditina</taxon>
        <taxon>Rhabditomorpha</taxon>
        <taxon>Rhabditoidea</taxon>
        <taxon>Rhabditidae</taxon>
        <taxon>Peloderinae</taxon>
        <taxon>Caenorhabditis</taxon>
    </lineage>
</organism>
<comment type="function">
    <text evidence="2 3">Pore-forming subunit of the mechanotransducer (MET) non-selective cation channel complex (PubMed:36224384). The MET complex is composed of symmetric dimeric MET channels, each channel comprising two copies of pore-forming ion-conducting transmembrane TMC subunits and auxiliary proteins including the transmembrane inner ear protein/tmie, the calcium-binding protein/calm-1 and arrestin domain protein arrd-6 (PubMed:36224384). Sodium ions are the most permeable, whereas calcium and potassium have lower indices (PubMed:23364694). Sodium-sensor ion channel that acts specifically in salt taste chemosensation. Required for salt-evoked neuronal activity and behavioral avoidance of high concentrations of NaCl.</text>
</comment>
<comment type="catalytic activity">
    <reaction evidence="2">
        <text>Na(+)(in) = Na(+)(out)</text>
        <dbReference type="Rhea" id="RHEA:34963"/>
        <dbReference type="ChEBI" id="CHEBI:29101"/>
    </reaction>
</comment>
<comment type="catalytic activity">
    <reaction evidence="2">
        <text>Ca(2+)(in) = Ca(2+)(out)</text>
        <dbReference type="Rhea" id="RHEA:29671"/>
        <dbReference type="ChEBI" id="CHEBI:29108"/>
    </reaction>
</comment>
<comment type="catalytic activity">
    <reaction evidence="2">
        <text>K(+)(in) = K(+)(out)</text>
        <dbReference type="Rhea" id="RHEA:29463"/>
        <dbReference type="ChEBI" id="CHEBI:29103"/>
    </reaction>
</comment>
<comment type="subunit">
    <text evidence="3">Homodimer (PubMed:36224384). Interacts with calm-1 and tmie to form the MET channel (PubMed:36224384).</text>
</comment>
<comment type="subcellular location">
    <subcellularLocation>
        <location evidence="2">Cell membrane</location>
        <topology evidence="2 3">Multi-pass membrane protein</topology>
    </subcellularLocation>
</comment>
<comment type="tissue specificity">
    <text evidence="2">Expressed in the ASH polymodal avoidance neurons. Also expressed in other sensory neurons, including the ADF, ASE, ADL, AQR, PQR, URX and PHA cells.</text>
</comment>
<comment type="domain">
    <text evidence="3">Contains ten transmembrane domains with putative domains TM4-TM8 that line the channel pore.</text>
</comment>
<comment type="domain">
    <text evidence="3">Interacts with tmie through transmembrane domains TM6 and TM8 and via a tmie palmitoylated residue.</text>
</comment>
<comment type="domain">
    <text evidence="3">Interacts with calm-1 through cytosolic helical features including the helices H1 to H3, and H5-H6.</text>
</comment>
<comment type="disruption phenotype">
    <text evidence="2">No apparent defect in nose touch avoidance but mutants show strong defects in the avoidance of NaCl concentrations above 100 mM. Responses to other soluble repellents as well as to hyperosmolarity are indistinguishable from wild-type animals.</text>
</comment>
<comment type="similarity">
    <text evidence="4">Belongs to the TMC family.</text>
</comment>
<evidence type="ECO:0000256" key="1">
    <source>
        <dbReference type="SAM" id="MobiDB-lite"/>
    </source>
</evidence>
<evidence type="ECO:0000269" key="2">
    <source>
    </source>
</evidence>
<evidence type="ECO:0000269" key="3">
    <source>
    </source>
</evidence>
<evidence type="ECO:0000305" key="4"/>
<evidence type="ECO:0007744" key="5">
    <source>
        <dbReference type="PDB" id="7USW"/>
    </source>
</evidence>
<evidence type="ECO:0007744" key="6">
    <source>
        <dbReference type="PDB" id="7USX"/>
    </source>
</evidence>
<evidence type="ECO:0007744" key="7">
    <source>
        <dbReference type="PDB" id="7USY"/>
    </source>
</evidence>
<evidence type="ECO:0007829" key="8">
    <source>
        <dbReference type="PDB" id="7USW"/>
    </source>
</evidence>
<evidence type="ECO:0007829" key="9">
    <source>
        <dbReference type="PDB" id="7USX"/>
    </source>
</evidence>
<sequence length="1285" mass="147129">MQEAARRASLRKEHTPTNEKFGDLSKQDSLGERASSKLTLDDELYDILYAFGETDAFINKGDKQRETDEDGNPLTRQALLERIRQKKEVIGKLRCQAWSMTRKRRTLKLAQKYLEQHESKVSRSHLYMEEMRKRARLMKRSFSNFKTYLIPWESKIKRIESHFGSVVSSYFTFLRWIVFVNIMITLIALVFVVLPETLADSVANEGRFNRTKTRKQIPANERVHADELAVVWHYDGYLRYSPLFYGYYSDDPFLGNKIKYALPLAYFMVTLTIFAYSFFAILRKMAANARMSKLSGSKAEQYIFNWKLFTGWDYTIGNSETASNTVMAVVIKLRESIADIKKDAHGKFRLLQFSLRVFANIIICAMLGFSIYCIIFAVQKSQVQDDGNLFTKNQVPSVVSTITHVFPMIFDLIGKMENYHPRTALRAHLGRVLILYTVNYITLIFALFEKMTALRDRVNSTSTSSSHRTKRQQGGWNPNMQRPPPYASRAEVRQMSDFLAANTRRFQTVSQRTTRSVTTPFTVAPQFGPFNVNNPNAVFHNGTHSTSFESQILGPKALPIFTPPPRKYPGFTPGNVGQQFGGPDFPRNQVYTKSTPLPRVRTKPPWVYTTTHPPLVQNRAMTTTMSKSAKKGNSKNLDDDILLSNETIQMSEAALRRNHDGHNNDICWETIIGQEIVKLVTMDLIFTILSILVIDLFRGLWIKYCSSWWCWDIETTFPEYGEFKVAENVLHIINNQGMIWLGLFFAPLLPAINNIKLIILMYIRGWAVMTCNVPAREIFRASRSSNFYLGILLIWLLLCTLPVGFVIASMSPSRSCGPFARYQHFYTVVTREIEKRVDQTVLSYIRHIASPGVVIPIILFLILIIYFLFSLVRGLREANTDLQAQLVHERTEEKKKIFELAGGKKNKFEKDRDKKRSNDYIPLIEQRRREPWRQYHEMEADHALASDSSEESDINEDEDDERQPLTAYPLRAIETPPETLQVTAFHPSLGSLIENREMEDEESASGDQLPMIHKSVSFQGPSHMQMRQSISTESCSQISRSAIQVATPEEIRALLRPYLEAKYGIPYQHGIKSFPIDVHTPPNNTPSRRSSKYNSFVSLYEHTRDDHKNFVASTIKETDEDPGKSDKKQTSSKDVAPDFMPWPSADEARALREKMKSKTPLMLTKTTVEEKPKGGKSSESEFRPPVPIHRKYNIQTTEEENEEEETDSAPESSKKRFRISVSPTKTIAPASASRAQHKIVSQASSSSSIPHGRQPDPNKKASLVLPPLRAPRVQFDEDDSPRQID</sequence>
<reference key="1">
    <citation type="journal article" date="1998" name="Science">
        <title>Genome sequence of the nematode C. elegans: a platform for investigating biology.</title>
        <authorList>
            <consortium name="The C. elegans sequencing consortium"/>
        </authorList>
    </citation>
    <scope>NUCLEOTIDE SEQUENCE [LARGE SCALE GENOMIC DNA]</scope>
    <source>
        <strain>Bristol N2</strain>
    </source>
</reference>
<reference key="2">
    <citation type="journal article" date="2013" name="Nature">
        <title>tmc-1 encodes a sodium-sensitive channel required for salt chemosensation in C. elegans.</title>
        <authorList>
            <person name="Chatzigeorgiou M."/>
            <person name="Bang S."/>
            <person name="Hwang S.W."/>
            <person name="Schafer W.R."/>
        </authorList>
    </citation>
    <scope>FUNCTION</scope>
    <scope>SUBCELLULAR LOCATION</scope>
    <scope>TISSUE SPECIFICITY</scope>
    <scope>DISRUPTION PHENOTYPE</scope>
</reference>
<reference evidence="5 6 7" key="3">
    <citation type="journal article" date="2022" name="Nature">
        <title>Structures of the TMC-1 complex illuminate mechanosensory transduction.</title>
        <authorList>
            <person name="Jeong H."/>
            <person name="Clark S."/>
            <person name="Goehring A."/>
            <person name="Dehghani-Ghahnaviyeh S."/>
            <person name="Rasouli A."/>
            <person name="Tajkhorshid E."/>
            <person name="Gouaux E."/>
        </authorList>
    </citation>
    <scope>STRUCTURE BY ELECTRON MICROSCOPY (3.09 ANGSTROMS)</scope>
    <scope>FUNCTION</scope>
    <scope>SUBUNIT</scope>
    <scope>INTERACTION WITH TMIE AND CALM-1</scope>
    <scope>HOMODIMER</scope>
    <scope>DOMAIN</scope>
    <scope>SUBCELLULAR LOCATION</scope>
    <scope>DISULFIDE BOND</scope>
    <scope>GLYCOSYLATION AT ASN-209</scope>
</reference>
<dbReference type="EMBL" id="FO080889">
    <property type="protein sequence ID" value="CCD67541.1"/>
    <property type="molecule type" value="Genomic_DNA"/>
</dbReference>
<dbReference type="EMBL" id="FO080360">
    <property type="protein sequence ID" value="CCD67541.1"/>
    <property type="status" value="JOINED"/>
    <property type="molecule type" value="Genomic_DNA"/>
</dbReference>
<dbReference type="RefSeq" id="NP_508221.3">
    <property type="nucleotide sequence ID" value="NM_075820.5"/>
</dbReference>
<dbReference type="PDB" id="7USW">
    <property type="method" value="EM"/>
    <property type="resolution" value="3.10 A"/>
    <property type="chains" value="A/B=1-1285"/>
</dbReference>
<dbReference type="PDB" id="7USX">
    <property type="method" value="EM"/>
    <property type="resolution" value="3.09 A"/>
    <property type="chains" value="A/B=1-1285"/>
</dbReference>
<dbReference type="PDB" id="7USY">
    <property type="method" value="EM"/>
    <property type="resolution" value="3.54 A"/>
    <property type="chains" value="A/B=1-1285"/>
</dbReference>
<dbReference type="PDBsum" id="7USW"/>
<dbReference type="PDBsum" id="7USX"/>
<dbReference type="PDBsum" id="7USY"/>
<dbReference type="EMDB" id="EMD-26741"/>
<dbReference type="EMDB" id="EMD-26742"/>
<dbReference type="EMDB" id="EMD-26743"/>
<dbReference type="SMR" id="D3KZG3"/>
<dbReference type="FunCoup" id="D3KZG3">
    <property type="interactions" value="38"/>
</dbReference>
<dbReference type="STRING" id="6239.T13G4.3.1"/>
<dbReference type="TCDB" id="1.A.17.4.7">
    <property type="family name" value="the calcium-dependent chloride channel (ca-clc) family"/>
</dbReference>
<dbReference type="PaxDb" id="6239-T13G4.3"/>
<dbReference type="EnsemblMetazoa" id="T13G4.3.1">
    <property type="protein sequence ID" value="T13G4.3.1"/>
    <property type="gene ID" value="WBGene00020490"/>
</dbReference>
<dbReference type="EnsemblMetazoa" id="T13G4.3.2">
    <property type="protein sequence ID" value="T13G4.3.2"/>
    <property type="gene ID" value="WBGene00020490"/>
</dbReference>
<dbReference type="GeneID" id="188483"/>
<dbReference type="KEGG" id="cel:CELE_T13G4.3"/>
<dbReference type="AGR" id="WB:WBGene00020490"/>
<dbReference type="CTD" id="188483"/>
<dbReference type="WormBase" id="T13G4.3">
    <property type="protein sequence ID" value="CE37147"/>
    <property type="gene ID" value="WBGene00020490"/>
    <property type="gene designation" value="tmc-1"/>
</dbReference>
<dbReference type="eggNOG" id="ENOG502QQGX">
    <property type="taxonomic scope" value="Eukaryota"/>
</dbReference>
<dbReference type="GeneTree" id="ENSGT01050000244894"/>
<dbReference type="HOGENOM" id="CLU_278527_0_0_1"/>
<dbReference type="InParanoid" id="D3KZG3"/>
<dbReference type="OMA" id="IFLRWVF"/>
<dbReference type="OrthoDB" id="5831905at2759"/>
<dbReference type="PhylomeDB" id="D3KZG3"/>
<dbReference type="PRO" id="PR:D3KZG3"/>
<dbReference type="Proteomes" id="UP000001940">
    <property type="component" value="Chromosome X"/>
</dbReference>
<dbReference type="Bgee" id="WBGene00020490">
    <property type="expression patterns" value="Expressed in larva and 3 other cell types or tissues"/>
</dbReference>
<dbReference type="GO" id="GO:0043025">
    <property type="term" value="C:neuronal cell body"/>
    <property type="evidence" value="ECO:0000314"/>
    <property type="project" value="WormBase"/>
</dbReference>
<dbReference type="GO" id="GO:0097730">
    <property type="term" value="C:non-motile cilium"/>
    <property type="evidence" value="ECO:0000314"/>
    <property type="project" value="WormBase"/>
</dbReference>
<dbReference type="GO" id="GO:0005886">
    <property type="term" value="C:plasma membrane"/>
    <property type="evidence" value="ECO:0000314"/>
    <property type="project" value="UniProtKB"/>
</dbReference>
<dbReference type="GO" id="GO:0008381">
    <property type="term" value="F:mechanosensitive monoatomic ion channel activity"/>
    <property type="evidence" value="ECO:0000318"/>
    <property type="project" value="GO_Central"/>
</dbReference>
<dbReference type="GO" id="GO:0005216">
    <property type="term" value="F:monoatomic ion channel activity"/>
    <property type="evidence" value="ECO:0000314"/>
    <property type="project" value="UniProtKB"/>
</dbReference>
<dbReference type="GO" id="GO:0005272">
    <property type="term" value="F:sodium channel activity"/>
    <property type="evidence" value="ECO:0000315"/>
    <property type="project" value="CACAO"/>
</dbReference>
<dbReference type="GO" id="GO:0050906">
    <property type="term" value="P:detection of stimulus involved in sensory perception"/>
    <property type="evidence" value="ECO:0000315"/>
    <property type="project" value="UniProtKB"/>
</dbReference>
<dbReference type="GO" id="GO:0034220">
    <property type="term" value="P:monoatomic ion transmembrane transport"/>
    <property type="evidence" value="ECO:0000314"/>
    <property type="project" value="UniProtKB"/>
</dbReference>
<dbReference type="GO" id="GO:0007606">
    <property type="term" value="P:sensory perception of chemical stimulus"/>
    <property type="evidence" value="ECO:0000315"/>
    <property type="project" value="UniProtKB"/>
</dbReference>
<dbReference type="InterPro" id="IPR038900">
    <property type="entry name" value="TMC"/>
</dbReference>
<dbReference type="InterPro" id="IPR012496">
    <property type="entry name" value="TMC_dom"/>
</dbReference>
<dbReference type="PANTHER" id="PTHR23302:SF40">
    <property type="entry name" value="TRANSMEMBRANE CHANNEL-LIKE PROTEIN"/>
    <property type="match status" value="1"/>
</dbReference>
<dbReference type="PANTHER" id="PTHR23302">
    <property type="entry name" value="TRANSMEMBRANE CHANNEL-RELATED"/>
    <property type="match status" value="1"/>
</dbReference>
<dbReference type="Pfam" id="PF07810">
    <property type="entry name" value="TMC"/>
    <property type="match status" value="1"/>
</dbReference>
<gene>
    <name type="primary">tmc-1</name>
    <name type="ORF">T13G4.3</name>
</gene>
<proteinExistence type="evidence at protein level"/>
<keyword id="KW-0002">3D-structure</keyword>
<keyword id="KW-1003">Cell membrane</keyword>
<keyword id="KW-1015">Disulfide bond</keyword>
<keyword id="KW-0325">Glycoprotein</keyword>
<keyword id="KW-0407">Ion channel</keyword>
<keyword id="KW-0406">Ion transport</keyword>
<keyword id="KW-0472">Membrane</keyword>
<keyword id="KW-1185">Reference proteome</keyword>
<keyword id="KW-0812">Transmembrane</keyword>
<keyword id="KW-1133">Transmembrane helix</keyword>
<keyword id="KW-0813">Transport</keyword>